<organism>
    <name type="scientific">Coxiella burnetii (strain Dugway 5J108-111)</name>
    <dbReference type="NCBI Taxonomy" id="434922"/>
    <lineage>
        <taxon>Bacteria</taxon>
        <taxon>Pseudomonadati</taxon>
        <taxon>Pseudomonadota</taxon>
        <taxon>Gammaproteobacteria</taxon>
        <taxon>Legionellales</taxon>
        <taxon>Coxiellaceae</taxon>
        <taxon>Coxiella</taxon>
    </lineage>
</organism>
<evidence type="ECO:0000255" key="1">
    <source>
        <dbReference type="HAMAP-Rule" id="MF_00272"/>
    </source>
</evidence>
<evidence type="ECO:0000255" key="2">
    <source>
        <dbReference type="PROSITE-ProRule" id="PRU01066"/>
    </source>
</evidence>
<proteinExistence type="inferred from homology"/>
<name>GCSH_COXBN</name>
<sequence>MAEFPAELYYSKNHEWMRKESDETFTVGITDHAQEQLGDLVFVELPETNIHVDAGDEVAVVESVKTAADVYSPLSGKVIEINNALENEPATVNRDPYGDGWLYRITIDDEKELNDLLDADGYQTLIEAES</sequence>
<accession>A9KC18</accession>
<protein>
    <recommendedName>
        <fullName evidence="1">Glycine cleavage system H protein</fullName>
    </recommendedName>
</protein>
<reference key="1">
    <citation type="journal article" date="2009" name="Infect. Immun.">
        <title>Comparative genomics reveal extensive transposon-mediated genomic plasticity and diversity among potential effector proteins within the genus Coxiella.</title>
        <authorList>
            <person name="Beare P.A."/>
            <person name="Unsworth N."/>
            <person name="Andoh M."/>
            <person name="Voth D.E."/>
            <person name="Omsland A."/>
            <person name="Gilk S.D."/>
            <person name="Williams K.P."/>
            <person name="Sobral B.W."/>
            <person name="Kupko J.J. III"/>
            <person name="Porcella S.F."/>
            <person name="Samuel J.E."/>
            <person name="Heinzen R.A."/>
        </authorList>
    </citation>
    <scope>NUCLEOTIDE SEQUENCE [LARGE SCALE GENOMIC DNA]</scope>
    <source>
        <strain>Dugway 5J108-111</strain>
    </source>
</reference>
<comment type="function">
    <text evidence="1">The glycine cleavage system catalyzes the degradation of glycine. The H protein shuttles the methylamine group of glycine from the P protein to the T protein.</text>
</comment>
<comment type="cofactor">
    <cofactor evidence="1">
        <name>(R)-lipoate</name>
        <dbReference type="ChEBI" id="CHEBI:83088"/>
    </cofactor>
    <text evidence="1">Binds 1 lipoyl cofactor covalently.</text>
</comment>
<comment type="subunit">
    <text evidence="1">The glycine cleavage system is composed of four proteins: P, T, L and H.</text>
</comment>
<comment type="similarity">
    <text evidence="1">Belongs to the GcvH family.</text>
</comment>
<gene>
    <name evidence="1" type="primary">gcvH</name>
    <name type="ordered locus">CBUD_0290</name>
</gene>
<feature type="chain" id="PRO_1000078728" description="Glycine cleavage system H protein">
    <location>
        <begin position="1"/>
        <end position="130"/>
    </location>
</feature>
<feature type="domain" description="Lipoyl-binding" evidence="2">
    <location>
        <begin position="24"/>
        <end position="106"/>
    </location>
</feature>
<feature type="modified residue" description="N6-lipoyllysine" evidence="1">
    <location>
        <position position="65"/>
    </location>
</feature>
<dbReference type="EMBL" id="CP000733">
    <property type="protein sequence ID" value="ABS77428.1"/>
    <property type="molecule type" value="Genomic_DNA"/>
</dbReference>
<dbReference type="RefSeq" id="WP_005770508.1">
    <property type="nucleotide sequence ID" value="NC_009727.1"/>
</dbReference>
<dbReference type="SMR" id="A9KC18"/>
<dbReference type="KEGG" id="cbd:CBUD_0290"/>
<dbReference type="HOGENOM" id="CLU_097408_2_1_6"/>
<dbReference type="Proteomes" id="UP000008555">
    <property type="component" value="Chromosome"/>
</dbReference>
<dbReference type="GO" id="GO:0005829">
    <property type="term" value="C:cytosol"/>
    <property type="evidence" value="ECO:0007669"/>
    <property type="project" value="TreeGrafter"/>
</dbReference>
<dbReference type="GO" id="GO:0005960">
    <property type="term" value="C:glycine cleavage complex"/>
    <property type="evidence" value="ECO:0007669"/>
    <property type="project" value="InterPro"/>
</dbReference>
<dbReference type="GO" id="GO:0019464">
    <property type="term" value="P:glycine decarboxylation via glycine cleavage system"/>
    <property type="evidence" value="ECO:0007669"/>
    <property type="project" value="UniProtKB-UniRule"/>
</dbReference>
<dbReference type="CDD" id="cd06848">
    <property type="entry name" value="GCS_H"/>
    <property type="match status" value="1"/>
</dbReference>
<dbReference type="Gene3D" id="2.40.50.100">
    <property type="match status" value="1"/>
</dbReference>
<dbReference type="HAMAP" id="MF_00272">
    <property type="entry name" value="GcvH"/>
    <property type="match status" value="1"/>
</dbReference>
<dbReference type="InterPro" id="IPR003016">
    <property type="entry name" value="2-oxoA_DH_lipoyl-BS"/>
</dbReference>
<dbReference type="InterPro" id="IPR000089">
    <property type="entry name" value="Biotin_lipoyl"/>
</dbReference>
<dbReference type="InterPro" id="IPR002930">
    <property type="entry name" value="GCV_H"/>
</dbReference>
<dbReference type="InterPro" id="IPR033753">
    <property type="entry name" value="GCV_H/Fam206"/>
</dbReference>
<dbReference type="InterPro" id="IPR017453">
    <property type="entry name" value="GCV_H_sub"/>
</dbReference>
<dbReference type="InterPro" id="IPR011053">
    <property type="entry name" value="Single_hybrid_motif"/>
</dbReference>
<dbReference type="NCBIfam" id="TIGR00527">
    <property type="entry name" value="gcvH"/>
    <property type="match status" value="1"/>
</dbReference>
<dbReference type="NCBIfam" id="NF002270">
    <property type="entry name" value="PRK01202.1"/>
    <property type="match status" value="1"/>
</dbReference>
<dbReference type="PANTHER" id="PTHR11715">
    <property type="entry name" value="GLYCINE CLEAVAGE SYSTEM H PROTEIN"/>
    <property type="match status" value="1"/>
</dbReference>
<dbReference type="PANTHER" id="PTHR11715:SF3">
    <property type="entry name" value="GLYCINE CLEAVAGE SYSTEM H PROTEIN-RELATED"/>
    <property type="match status" value="1"/>
</dbReference>
<dbReference type="Pfam" id="PF01597">
    <property type="entry name" value="GCV_H"/>
    <property type="match status" value="1"/>
</dbReference>
<dbReference type="SUPFAM" id="SSF51230">
    <property type="entry name" value="Single hybrid motif"/>
    <property type="match status" value="1"/>
</dbReference>
<dbReference type="PROSITE" id="PS50968">
    <property type="entry name" value="BIOTINYL_LIPOYL"/>
    <property type="match status" value="1"/>
</dbReference>
<dbReference type="PROSITE" id="PS00189">
    <property type="entry name" value="LIPOYL"/>
    <property type="match status" value="1"/>
</dbReference>
<keyword id="KW-0450">Lipoyl</keyword>